<feature type="chain" id="PRO_0000435106" description="NACHT, LRR and PYD domains-containing protein 1b allele 4">
    <location>
        <begin position="1"/>
        <end position="906"/>
    </location>
</feature>
<feature type="domain" description="NACHT" evidence="2">
    <location>
        <begin position="126"/>
        <end position="435"/>
    </location>
</feature>
<feature type="repeat" description="LRR 1">
    <location>
        <begin position="627"/>
        <end position="647"/>
    </location>
</feature>
<feature type="repeat" description="LRR 2">
    <location>
        <begin position="684"/>
        <end position="704"/>
    </location>
</feature>
<feature type="domain" description="FIIND (incomplete)" evidence="3">
    <location>
        <begin position="789"/>
        <end position="906"/>
    </location>
</feature>
<feature type="region of interest" description="Disordered" evidence="4">
    <location>
        <begin position="1"/>
        <end position="22"/>
    </location>
</feature>
<feature type="binding site" evidence="2">
    <location>
        <begin position="132"/>
        <end position="139"/>
    </location>
    <ligand>
        <name>ATP</name>
        <dbReference type="ChEBI" id="CHEBI:30616"/>
    </ligand>
</feature>
<feature type="splice variant" id="VSP_058008" description="In isoform 2.">
    <original>WLDLSSLSAQVIT</original>
    <variation>CRKSGSDVSMHRN</variation>
    <location>
        <begin position="718"/>
        <end position="730"/>
    </location>
</feature>
<feature type="splice variant" id="VSP_058009" description="In isoform 2.">
    <location>
        <begin position="731"/>
        <end position="906"/>
    </location>
</feature>
<dbReference type="EMBL" id="DQ117597">
    <property type="protein sequence ID" value="AAZ40523.1"/>
    <property type="molecule type" value="mRNA"/>
</dbReference>
<dbReference type="EMBL" id="DQ117598">
    <property type="protein sequence ID" value="AAZ40524.1"/>
    <property type="molecule type" value="mRNA"/>
</dbReference>
<dbReference type="EMBL" id="DQ117599">
    <property type="protein sequence ID" value="AAZ40525.1"/>
    <property type="molecule type" value="mRNA"/>
</dbReference>
<dbReference type="EMBL" id="DQ153215">
    <property type="protein sequence ID" value="AAZ40530.1"/>
    <property type="molecule type" value="mRNA"/>
</dbReference>
<dbReference type="SMR" id="Q2LKV2"/>
<dbReference type="IntAct" id="Q2LKV2">
    <property type="interactions" value="1"/>
</dbReference>
<dbReference type="MEROPS" id="S79.A03"/>
<dbReference type="AGR" id="MGI:3582959"/>
<dbReference type="MGI" id="MGI:3582959">
    <property type="gene designation" value="Nlrp1b"/>
</dbReference>
<dbReference type="OrthoDB" id="428577at2759"/>
<dbReference type="GO" id="GO:0005829">
    <property type="term" value="C:cytosol"/>
    <property type="evidence" value="ECO:0007669"/>
    <property type="project" value="UniProtKB-SubCell"/>
</dbReference>
<dbReference type="GO" id="GO:0005524">
    <property type="term" value="F:ATP binding"/>
    <property type="evidence" value="ECO:0007669"/>
    <property type="project" value="UniProtKB-KW"/>
</dbReference>
<dbReference type="GO" id="GO:0030163">
    <property type="term" value="P:protein catabolic process"/>
    <property type="evidence" value="ECO:0000315"/>
    <property type="project" value="MGI"/>
</dbReference>
<dbReference type="GO" id="GO:0070269">
    <property type="term" value="P:pyroptotic inflammatory response"/>
    <property type="evidence" value="ECO:0000315"/>
    <property type="project" value="MGI"/>
</dbReference>
<dbReference type="FunFam" id="3.40.50.300:FF:000897">
    <property type="entry name" value="NLR family pyrin domain containing 1"/>
    <property type="match status" value="1"/>
</dbReference>
<dbReference type="FunFam" id="3.80.10.10:FF:000622">
    <property type="entry name" value="NLR family, pyrin domain containing 1B, PWK/PhJ specific, allele 1"/>
    <property type="match status" value="1"/>
</dbReference>
<dbReference type="Gene3D" id="3.40.50.300">
    <property type="entry name" value="P-loop containing nucleotide triphosphate hydrolases"/>
    <property type="match status" value="1"/>
</dbReference>
<dbReference type="Gene3D" id="3.80.10.10">
    <property type="entry name" value="Ribonuclease Inhibitor"/>
    <property type="match status" value="1"/>
</dbReference>
<dbReference type="InterPro" id="IPR025307">
    <property type="entry name" value="FIIND_dom"/>
</dbReference>
<dbReference type="InterPro" id="IPR032675">
    <property type="entry name" value="LRR_dom_sf"/>
</dbReference>
<dbReference type="InterPro" id="IPR007111">
    <property type="entry name" value="NACHT_NTPase"/>
</dbReference>
<dbReference type="InterPro" id="IPR041267">
    <property type="entry name" value="NLRP_HD2"/>
</dbReference>
<dbReference type="InterPro" id="IPR050637">
    <property type="entry name" value="NLRP_innate_immun_reg"/>
</dbReference>
<dbReference type="InterPro" id="IPR041075">
    <property type="entry name" value="NOD1/2_WH"/>
</dbReference>
<dbReference type="InterPro" id="IPR027417">
    <property type="entry name" value="P-loop_NTPase"/>
</dbReference>
<dbReference type="PANTHER" id="PTHR45690">
    <property type="entry name" value="NACHT, LRR AND PYD DOMAINS-CONTAINING PROTEIN 12"/>
    <property type="match status" value="1"/>
</dbReference>
<dbReference type="PANTHER" id="PTHR45690:SF15">
    <property type="entry name" value="NACHT, LRR AND PYD DOMAINS-CONTAINING PROTEIN 14"/>
    <property type="match status" value="1"/>
</dbReference>
<dbReference type="Pfam" id="PF13553">
    <property type="entry name" value="FIIND"/>
    <property type="match status" value="1"/>
</dbReference>
<dbReference type="Pfam" id="PF05729">
    <property type="entry name" value="NACHT"/>
    <property type="match status" value="1"/>
</dbReference>
<dbReference type="Pfam" id="PF17776">
    <property type="entry name" value="NLRC4_HD2"/>
    <property type="match status" value="1"/>
</dbReference>
<dbReference type="Pfam" id="PF17779">
    <property type="entry name" value="NOD2_WH"/>
    <property type="match status" value="1"/>
</dbReference>
<dbReference type="PRINTS" id="PR00364">
    <property type="entry name" value="DISEASERSIST"/>
</dbReference>
<dbReference type="SMART" id="SM00368">
    <property type="entry name" value="LRR_RI"/>
    <property type="match status" value="3"/>
</dbReference>
<dbReference type="SUPFAM" id="SSF52540">
    <property type="entry name" value="P-loop containing nucleoside triphosphate hydrolases"/>
    <property type="match status" value="1"/>
</dbReference>
<dbReference type="SUPFAM" id="SSF52047">
    <property type="entry name" value="RNI-like"/>
    <property type="match status" value="1"/>
</dbReference>
<dbReference type="PROSITE" id="PS51830">
    <property type="entry name" value="FIIND"/>
    <property type="match status" value="1"/>
</dbReference>
<dbReference type="PROSITE" id="PS50837">
    <property type="entry name" value="NACHT"/>
    <property type="match status" value="1"/>
</dbReference>
<accession>Q2LKV2</accession>
<accession>Q2LK60</accession>
<keyword id="KW-0025">Alternative splicing</keyword>
<keyword id="KW-0067">ATP-binding</keyword>
<keyword id="KW-0963">Cytoplasm</keyword>
<keyword id="KW-0433">Leucine-rich repeat</keyword>
<keyword id="KW-0547">Nucleotide-binding</keyword>
<keyword id="KW-0677">Repeat</keyword>
<gene>
    <name evidence="8" type="primary">Nlrp1b</name>
    <name evidence="7" type="synonym">Nalp1b</name>
</gene>
<reference key="1">
    <citation type="journal article" date="2006" name="Nat. Genet.">
        <title>Nalp1b controls mouse macrophage susceptibility to anthrax lethal toxin.</title>
        <authorList>
            <person name="Boyden E.D."/>
            <person name="Dietrich W.F."/>
        </authorList>
    </citation>
    <scope>NUCLEOTIDE SEQUENCE [MRNA] (ISOFORMS 1 AND 2)</scope>
    <scope>FUNCTION</scope>
    <scope>TISSUE SPECIFICITY</scope>
    <source>
        <strain>DBA/2J</strain>
        <strain>P/J</strain>
        <strain>SM/J</strain>
    </source>
</reference>
<reference key="2">
    <citation type="journal article" date="2013" name="BMC Genomics">
        <title>Transcriptional analysis of the three Nlrp1 paralogs in mice.</title>
        <authorList>
            <person name="Sastalla I."/>
            <person name="Crown D."/>
            <person name="Masters S.L."/>
            <person name="McKenzie A."/>
            <person name="Leppla S.H."/>
            <person name="Moayeri M."/>
        </authorList>
    </citation>
    <scope>TISSUE SPECIFICITY</scope>
</reference>
<reference key="3">
    <citation type="journal article" date="2020" name="Immunol. Rev.">
        <title>The NLRP1 and CARD8 inflammasomes.</title>
        <authorList>
            <person name="Taabazuing C.Y."/>
            <person name="Griswold A.R."/>
            <person name="Bachovchin D.A."/>
        </authorList>
    </citation>
    <scope>REVIEW</scope>
</reference>
<organism evidence="11">
    <name type="scientific">Mus musculus</name>
    <name type="common">Mouse</name>
    <dbReference type="NCBI Taxonomy" id="10090"/>
    <lineage>
        <taxon>Eukaryota</taxon>
        <taxon>Metazoa</taxon>
        <taxon>Chordata</taxon>
        <taxon>Craniata</taxon>
        <taxon>Vertebrata</taxon>
        <taxon>Euteleostomi</taxon>
        <taxon>Mammalia</taxon>
        <taxon>Eutheria</taxon>
        <taxon>Euarchontoglires</taxon>
        <taxon>Glires</taxon>
        <taxon>Rodentia</taxon>
        <taxon>Myomorpha</taxon>
        <taxon>Muroidea</taxon>
        <taxon>Muridae</taxon>
        <taxon>Murinae</taxon>
        <taxon>Mus</taxon>
        <taxon>Mus</taxon>
    </lineage>
</organism>
<name>NL1B4_MOUSE</name>
<comment type="function">
    <text evidence="5">Probable inactive allele of Nlrp1b, which lacks a CARD domain, suggesting that it is not able to form an inflammasome (PubMed:16429160). Contrary to Nlrp1b allele 1, allele 4 is not activated by B.anthracis lethal toxin and no other activation signal is reported (PubMed:16429160).</text>
</comment>
<comment type="subcellular location">
    <subcellularLocation>
        <location evidence="1">Cytoplasm</location>
    </subcellularLocation>
    <subcellularLocation>
        <location evidence="1">Cytoplasm</location>
        <location evidence="1">Cytosol</location>
    </subcellularLocation>
</comment>
<comment type="alternative products">
    <event type="alternative splicing"/>
    <isoform>
        <id>Q2LKV2-1</id>
        <name>1</name>
        <sequence type="displayed"/>
    </isoform>
    <isoform>
        <id>Q2LKV2-2</id>
        <name>2</name>
        <sequence type="described" ref="VSP_058008 VSP_058009"/>
    </isoform>
</comment>
<comment type="tissue specificity">
    <text evidence="5 6">Expressed in macrophages.</text>
</comment>
<comment type="domain">
    <text evidence="10">Contrary to Nlrp1b alleles 1, 2, 3 and 5, allele 4 is missing a CARD domain, which has been shown in other alleles to be involved in the interaction with CASP1 and CASP4/CASP11. It is thus unclear if this allele is able to promote inflammasome assembly.</text>
</comment>
<comment type="domain">
    <text evidence="5">The FIIND (domain with function to find) region may be involved in homomerization, but not in CASP1-binding (PubMed:16429160). In allele 4, the FIIND region is truncated and hence does not contain the activating cleavage reported for allele 1 (PubMed:16429160). Consequently, it may not undergo autocatalytic cleavage in this region (PubMed:16429160).</text>
</comment>
<comment type="polymorphism">
    <text evidence="5 7">Nlrp1b gene is extremely polymorphic. 5 alleles have been described in 18 inbred strains: 1 (AC Q2LKW6), 2 (AC A1Z198), 3 (AC Q2LKV5), 4 (this entry) and 5 (AC Q0GKD5). These alleles define susceptibility to B.anthracis lethal toxin (LT). Alleles 2 (carried by A/J, C57BL/6J and I/LnJ), 3 (AKR/J, NOD/LtJ and SJL/J) or 4 (DBA/2J, P/J and SM/J) are not activated by LT. Alleles 1 (carried by 129S1/SvImJ, BALB/cJ, C3H/HeJ, CBA/J, FVB/NJ, NON/ShiLtJ, NZO (NZO/HlLtJ) and SWR/J strains) and 5 (CAST/EiJ) confer macrophage susceptibility to LT. In susceptible strains, infection by Bacillus anthracis leads to IL1B release, neutrophil recruitment and macrophage pyroptosis. This early inflammatory response confers increased resistance to infection (PubMed:16429160). The sequence shown in this entry is that of allele 4 (PubMed:16429160).</text>
</comment>
<comment type="miscellaneous">
    <text evidence="6 10">Three tandem Nrlp1 paralogs, Nrlp1a, Nrlp1b and Nrlp1c, have been identified. Nlrp1c is predicted to be a pseudogene.</text>
</comment>
<comment type="miscellaneous">
    <molecule>Isoform 2</molecule>
    <text evidence="9">May be produced at very low levels due to a premature stop codon in the mRNA, leading to nonsense-mediated mRNA decay.</text>
</comment>
<comment type="similarity">
    <text evidence="9">Belongs to the NLRP family.</text>
</comment>
<protein>
    <recommendedName>
        <fullName evidence="7">NACHT, LRR and PYD domains-containing protein 1b allele 4</fullName>
    </recommendedName>
</protein>
<sequence>MEESPPKQKSNTKVAQHEGQQDLNTTRHMNVELKHRPKLERHLKLGMIPVVYMKQREEILYPAQSLKEENLIQNFTSLPLLQKLCPKDPENMVRKSWASCIPEEGGHMINIQDLFGPNIGTQKEPQLVIIEGAAGIGKSTLARLVKRAWKEGQLYRDHFQHVFFFSCRELAQCKKLSLAELIAQGQEVPTAPINQILSHPEKLLFILDGIDEPAWVLADQNPELCLHWSQRQPVHTLLGSLLGKSILPEAFFLLTTRTTALQKFIPSLPMPCQVEVLGFSGIEWENYFYKYFANQRHAITAFMMVESNPVLLTLCEVPWVCWLVCTCLKKQMKQGRVLSLKSQTTTALCLKYLSLTIPDKHRRTQVKALCSLAAEGIWKRRTLFSESDLCKQGLDEDAVATFLKTGVLQKQASSLSYSFAHLCLQEFFAAISCILEDSEERHGNMEMDRIVETLVERYGRQNLFEAPTVRFLFGLLGKEGVKGMEKLFSCSLPGKTKLKLLWHILGKSQPHQPPCLGLLHCLYENQDMELLTHVMHDLQGTIVPGPNDIAHTVLQTNVKQLVVQTDMELMVATFCIQFYCHVRTLQLNMEKQQGYALTSPRMVLYRWTPITNASWEILFYNLKFTRNLEGLDLSGNSLRYSVVQSLCNTLRYPGCQLKTLWLVKCGLTSRYCSLLASVLSAHSSLTELYLQLNDLGDDGVRMLCEGLRNPVCNLSILWLDLSSLSAQVITELRTLEEKNPKLYIRSIWMPHMMVPTENMDEEAILTTFKQQRQESGDKPMEILGTEEDFWGPTGPVATELVDRVRNLYRVQLPMAGSYHCPSTGLHFVVTRAVTIEIEFCAWSQFLDKTPLQQSHMVVGPLFDIKAEQGAVTAVYLPHFVSLKDTEASTFDFKVTHFQEHGSRNAR</sequence>
<evidence type="ECO:0000250" key="1">
    <source>
        <dbReference type="UniProtKB" id="Q9C000"/>
    </source>
</evidence>
<evidence type="ECO:0000255" key="2">
    <source>
        <dbReference type="PROSITE-ProRule" id="PRU00136"/>
    </source>
</evidence>
<evidence type="ECO:0000255" key="3">
    <source>
        <dbReference type="PROSITE-ProRule" id="PRU01174"/>
    </source>
</evidence>
<evidence type="ECO:0000256" key="4">
    <source>
        <dbReference type="SAM" id="MobiDB-lite"/>
    </source>
</evidence>
<evidence type="ECO:0000269" key="5">
    <source>
    </source>
</evidence>
<evidence type="ECO:0000269" key="6">
    <source>
    </source>
</evidence>
<evidence type="ECO:0000303" key="7">
    <source>
    </source>
</evidence>
<evidence type="ECO:0000303" key="8">
    <source>
    </source>
</evidence>
<evidence type="ECO:0000305" key="9"/>
<evidence type="ECO:0000305" key="10">
    <source>
    </source>
</evidence>
<evidence type="ECO:0000312" key="11">
    <source>
        <dbReference type="EMBL" id="AAZ40524.1"/>
    </source>
</evidence>
<proteinExistence type="evidence at transcript level"/>